<reference key="1">
    <citation type="journal article" date="2002" name="J. Bacteriol.">
        <title>Genome sequence and analysis of the oral bacterium Fusobacterium nucleatum strain ATCC 25586.</title>
        <authorList>
            <person name="Kapatral V."/>
            <person name="Anderson I."/>
            <person name="Ivanova N."/>
            <person name="Reznik G."/>
            <person name="Los T."/>
            <person name="Lykidis A."/>
            <person name="Bhattacharyya A."/>
            <person name="Bartman A."/>
            <person name="Gardner W."/>
            <person name="Grechkin G."/>
            <person name="Zhu L."/>
            <person name="Vasieva O."/>
            <person name="Chu L."/>
            <person name="Kogan Y."/>
            <person name="Chaga O."/>
            <person name="Goltsman E."/>
            <person name="Bernal A."/>
            <person name="Larsen N."/>
            <person name="D'Souza M."/>
            <person name="Walunas T."/>
            <person name="Pusch G."/>
            <person name="Haselkorn R."/>
            <person name="Fonstein M."/>
            <person name="Kyrpides N.C."/>
            <person name="Overbeek R."/>
        </authorList>
    </citation>
    <scope>NUCLEOTIDE SEQUENCE [LARGE SCALE GENOMIC DNA]</scope>
    <source>
        <strain>ATCC 25586 / DSM 15643 / BCRC 10681 / CIP 101130 / JCM 8532 / KCTC 2640 / LMG 13131 / VPI 4355</strain>
    </source>
</reference>
<evidence type="ECO:0000255" key="1">
    <source>
        <dbReference type="HAMAP-Rule" id="MF_01030"/>
    </source>
</evidence>
<protein>
    <recommendedName>
        <fullName evidence="1">Probable D-serine dehydratase</fullName>
        <ecNumber evidence="1">4.3.1.18</ecNumber>
    </recommendedName>
    <alternativeName>
        <fullName evidence="1">D-serine deaminase</fullName>
        <shortName evidence="1">DSD</shortName>
    </alternativeName>
</protein>
<name>SDHD_FUSNN</name>
<proteinExistence type="inferred from homology"/>
<comment type="catalytic activity">
    <reaction evidence="1">
        <text>D-serine = pyruvate + NH4(+)</text>
        <dbReference type="Rhea" id="RHEA:13977"/>
        <dbReference type="ChEBI" id="CHEBI:15361"/>
        <dbReference type="ChEBI" id="CHEBI:28938"/>
        <dbReference type="ChEBI" id="CHEBI:35247"/>
        <dbReference type="EC" id="4.3.1.18"/>
    </reaction>
</comment>
<comment type="cofactor">
    <cofactor evidence="1">
        <name>pyridoxal 5'-phosphate</name>
        <dbReference type="ChEBI" id="CHEBI:597326"/>
    </cofactor>
</comment>
<comment type="similarity">
    <text evidence="1">Belongs to the serine/threonine dehydratase family. DsdA subfamily.</text>
</comment>
<accession>Q8RFX6</accession>
<gene>
    <name evidence="1" type="primary">dsdA</name>
    <name type="ordered locus">FN0553</name>
</gene>
<organism>
    <name type="scientific">Fusobacterium nucleatum subsp. nucleatum (strain ATCC 25586 / DSM 15643 / BCRC 10681 / CIP 101130 / JCM 8532 / KCTC 2640 / LMG 13131 / VPI 4355)</name>
    <dbReference type="NCBI Taxonomy" id="190304"/>
    <lineage>
        <taxon>Bacteria</taxon>
        <taxon>Fusobacteriati</taxon>
        <taxon>Fusobacteriota</taxon>
        <taxon>Fusobacteriia</taxon>
        <taxon>Fusobacteriales</taxon>
        <taxon>Fusobacteriaceae</taxon>
        <taxon>Fusobacterium</taxon>
    </lineage>
</organism>
<sequence>MDIKNMIINNPLIKNMIDKKEVGWTNPKEMNYTEYEKKLPLKDQELKEAEERLKRFAPFIKKVFPETEETYGIIESPLEEIFNMQKELEKKYHTEILGKLYLKMDSHLPVAGSIKARGGVYEVLKHAEELAMEAGLLKLEDDYSILADKKFKDFFSKYKIQVGSTGNLGLSIGITSAALGFQVIVHMSADAKKWKKDMLRSKGVQVIEYESDYGKAVEEGRKNSDADPMSYFVDDEKSMNLFLGYTVAASRIKKQFDKKGIVINKEHPLIVYIPCGVGGAPGGVAYGLKRIFKENVYIFFVEPVLAPCMLLGMQTGLHEKISVYDVGIHGITHADGLAVARPSGLVGRLMEPILSGIFTVDDYKLYDYLRILNETENKRIEPSSCAAFEGVVSLLKYEDSKKYIENRIGKNINNVYHVCWATGGKMVPQEDMEIFLNTYLK</sequence>
<keyword id="KW-0456">Lyase</keyword>
<keyword id="KW-0663">Pyridoxal phosphate</keyword>
<keyword id="KW-1185">Reference proteome</keyword>
<dbReference type="EC" id="4.3.1.18" evidence="1"/>
<dbReference type="EMBL" id="AE009951">
    <property type="protein sequence ID" value="AAL94749.1"/>
    <property type="molecule type" value="Genomic_DNA"/>
</dbReference>
<dbReference type="RefSeq" id="NP_603450.1">
    <property type="nucleotide sequence ID" value="NC_003454.1"/>
</dbReference>
<dbReference type="RefSeq" id="WP_011016476.1">
    <property type="nucleotide sequence ID" value="NZ_OZ209243.1"/>
</dbReference>
<dbReference type="SMR" id="Q8RFX6"/>
<dbReference type="FunCoup" id="Q8RFX6">
    <property type="interactions" value="21"/>
</dbReference>
<dbReference type="STRING" id="190304.FN0553"/>
<dbReference type="PaxDb" id="190304-FN0553"/>
<dbReference type="EnsemblBacteria" id="AAL94749">
    <property type="protein sequence ID" value="AAL94749"/>
    <property type="gene ID" value="FN0553"/>
</dbReference>
<dbReference type="GeneID" id="79783555"/>
<dbReference type="KEGG" id="fnu:FN0553"/>
<dbReference type="PATRIC" id="fig|190304.8.peg.1120"/>
<dbReference type="eggNOG" id="COG3048">
    <property type="taxonomic scope" value="Bacteria"/>
</dbReference>
<dbReference type="HOGENOM" id="CLU_035707_0_0_0"/>
<dbReference type="InParanoid" id="Q8RFX6"/>
<dbReference type="BioCyc" id="FNUC190304:G1FZS-1142-MONOMER"/>
<dbReference type="Proteomes" id="UP000002521">
    <property type="component" value="Chromosome"/>
</dbReference>
<dbReference type="GO" id="GO:0008721">
    <property type="term" value="F:D-serine ammonia-lyase activity"/>
    <property type="evidence" value="ECO:0000318"/>
    <property type="project" value="GO_Central"/>
</dbReference>
<dbReference type="GO" id="GO:0016836">
    <property type="term" value="F:hydro-lyase activity"/>
    <property type="evidence" value="ECO:0007669"/>
    <property type="project" value="UniProtKB-UniRule"/>
</dbReference>
<dbReference type="GO" id="GO:0030170">
    <property type="term" value="F:pyridoxal phosphate binding"/>
    <property type="evidence" value="ECO:0007669"/>
    <property type="project" value="InterPro"/>
</dbReference>
<dbReference type="GO" id="GO:0036088">
    <property type="term" value="P:D-serine catabolic process"/>
    <property type="evidence" value="ECO:0000318"/>
    <property type="project" value="GO_Central"/>
</dbReference>
<dbReference type="CDD" id="cd06447">
    <property type="entry name" value="D-Ser-dehyd"/>
    <property type="match status" value="1"/>
</dbReference>
<dbReference type="FunFam" id="3.40.50.1100:FF:000018">
    <property type="entry name" value="D-serine dehydratase"/>
    <property type="match status" value="1"/>
</dbReference>
<dbReference type="Gene3D" id="3.40.50.1100">
    <property type="match status" value="2"/>
</dbReference>
<dbReference type="HAMAP" id="MF_01030">
    <property type="entry name" value="D_Ser_dehydrat"/>
    <property type="match status" value="1"/>
</dbReference>
<dbReference type="InterPro" id="IPR011780">
    <property type="entry name" value="D_Ser_am_lyase"/>
</dbReference>
<dbReference type="InterPro" id="IPR050147">
    <property type="entry name" value="Ser/Thr_Dehydratase"/>
</dbReference>
<dbReference type="InterPro" id="IPR001926">
    <property type="entry name" value="TrpB-like_PALP"/>
</dbReference>
<dbReference type="InterPro" id="IPR036052">
    <property type="entry name" value="TrpB-like_PALP_sf"/>
</dbReference>
<dbReference type="NCBIfam" id="TIGR02035">
    <property type="entry name" value="D_Ser_am_lyase"/>
    <property type="match status" value="1"/>
</dbReference>
<dbReference type="NCBIfam" id="NF002823">
    <property type="entry name" value="PRK02991.1"/>
    <property type="match status" value="1"/>
</dbReference>
<dbReference type="PANTHER" id="PTHR48078:SF9">
    <property type="entry name" value="D-SERINE DEHYDRATASE"/>
    <property type="match status" value="1"/>
</dbReference>
<dbReference type="PANTHER" id="PTHR48078">
    <property type="entry name" value="THREONINE DEHYDRATASE, MITOCHONDRIAL-RELATED"/>
    <property type="match status" value="1"/>
</dbReference>
<dbReference type="Pfam" id="PF00291">
    <property type="entry name" value="PALP"/>
    <property type="match status" value="1"/>
</dbReference>
<dbReference type="SUPFAM" id="SSF53686">
    <property type="entry name" value="Tryptophan synthase beta subunit-like PLP-dependent enzymes"/>
    <property type="match status" value="1"/>
</dbReference>
<feature type="chain" id="PRO_0000185614" description="Probable D-serine dehydratase">
    <location>
        <begin position="1"/>
        <end position="441"/>
    </location>
</feature>
<feature type="modified residue" description="N6-(pyridoxal phosphate)lysine" evidence="1">
    <location>
        <position position="115"/>
    </location>
</feature>